<gene>
    <name evidence="3" type="primary">MBD3L2B</name>
</gene>
<comment type="miscellaneous">
    <text evidence="2">The MBD3L proteins are encoded by strongly repeated regions of the 19p13 chromosome. The exact number of functional copies is unclear, and some of them may represent pseudogenes.</text>
</comment>
<comment type="similarity">
    <text evidence="2">Belongs to the MBD3L family.</text>
</comment>
<organism>
    <name type="scientific">Homo sapiens</name>
    <name type="common">Human</name>
    <dbReference type="NCBI Taxonomy" id="9606"/>
    <lineage>
        <taxon>Eukaryota</taxon>
        <taxon>Metazoa</taxon>
        <taxon>Chordata</taxon>
        <taxon>Craniata</taxon>
        <taxon>Vertebrata</taxon>
        <taxon>Euteleostomi</taxon>
        <taxon>Mammalia</taxon>
        <taxon>Eutheria</taxon>
        <taxon>Euarchontoglires</taxon>
        <taxon>Primates</taxon>
        <taxon>Haplorrhini</taxon>
        <taxon>Catarrhini</taxon>
        <taxon>Hominidae</taxon>
        <taxon>Homo</taxon>
    </lineage>
</organism>
<protein>
    <recommendedName>
        <fullName evidence="3">Methyl-CpG-binding domain protein 3-like 2B</fullName>
    </recommendedName>
</protein>
<dbReference type="EMBL" id="AC010606">
    <property type="status" value="NOT_ANNOTATED_CDS"/>
    <property type="molecule type" value="Genomic_DNA"/>
</dbReference>
<dbReference type="EMBL" id="AC025278">
    <property type="status" value="NOT_ANNOTATED_CDS"/>
    <property type="molecule type" value="Genomic_DNA"/>
</dbReference>
<dbReference type="CCDS" id="CCDS92501.1"/>
<dbReference type="RefSeq" id="NP_001351603.1">
    <property type="nucleotide sequence ID" value="NM_001364674.2"/>
</dbReference>
<dbReference type="SMR" id="A0A1B0GVZ6"/>
<dbReference type="FunCoup" id="A0A1B0GVZ6">
    <property type="interactions" value="351"/>
</dbReference>
<dbReference type="GlyGen" id="A0A1B0GVZ6">
    <property type="glycosylation" value="2 sites"/>
</dbReference>
<dbReference type="BioMuta" id="MBD3L2B"/>
<dbReference type="MassIVE" id="A0A1B0GVZ6"/>
<dbReference type="Ensembl" id="ENST00000636986.2">
    <property type="protein sequence ID" value="ENSP00000489619.1"/>
    <property type="gene ID" value="ENSG00000196589.8"/>
</dbReference>
<dbReference type="GeneID" id="729458"/>
<dbReference type="MANE-Select" id="ENST00000636986.2">
    <property type="protein sequence ID" value="ENSP00000489619.1"/>
    <property type="RefSeq nucleotide sequence ID" value="NM_001364674.2"/>
    <property type="RefSeq protein sequence ID" value="NP_001351603.1"/>
</dbReference>
<dbReference type="AGR" id="HGNC:53435"/>
<dbReference type="GeneCards" id="MBD3L2B"/>
<dbReference type="HGNC" id="HGNC:53435">
    <property type="gene designation" value="MBD3L2B"/>
</dbReference>
<dbReference type="HPA" id="ENSG00000196589">
    <property type="expression patterns" value="Not detected"/>
</dbReference>
<dbReference type="neXtProt" id="NX_A0A1B0GVZ6"/>
<dbReference type="OpenTargets" id="ENSG00000196589"/>
<dbReference type="VEuPathDB" id="HostDB:ENSG00000196589"/>
<dbReference type="GeneTree" id="ENSGT00950000183005"/>
<dbReference type="InParanoid" id="A0A1B0GVZ6"/>
<dbReference type="OMA" id="HLELCAY"/>
<dbReference type="PAN-GO" id="A0A1B0GVZ6">
    <property type="GO annotations" value="0 GO annotations based on evolutionary models"/>
</dbReference>
<dbReference type="PhylomeDB" id="A0A1B0GVZ6"/>
<dbReference type="Pharos" id="A0A1B0GVZ6">
    <property type="development level" value="Tdark"/>
</dbReference>
<dbReference type="PRO" id="PR:A0A1B0GVZ6"/>
<dbReference type="Proteomes" id="UP000005640">
    <property type="component" value="Chromosome 19"/>
</dbReference>
<dbReference type="RNAct" id="A0A1B0GVZ6">
    <property type="molecule type" value="protein"/>
</dbReference>
<dbReference type="Bgee" id="ENSG00000196589">
    <property type="expression patterns" value="Expressed in primordial germ cell in gonad and 4 other cell types or tissues"/>
</dbReference>
<dbReference type="GO" id="GO:0005634">
    <property type="term" value="C:nucleus"/>
    <property type="evidence" value="ECO:0000318"/>
    <property type="project" value="GO_Central"/>
</dbReference>
<dbReference type="GO" id="GO:0008327">
    <property type="term" value="F:methyl-CpG binding"/>
    <property type="evidence" value="ECO:0000318"/>
    <property type="project" value="GO_Central"/>
</dbReference>
<dbReference type="GO" id="GO:0006346">
    <property type="term" value="P:DNA methylation-dependent constitutive heterochromatin formation"/>
    <property type="evidence" value="ECO:0000318"/>
    <property type="project" value="GO_Central"/>
</dbReference>
<dbReference type="GO" id="GO:0000122">
    <property type="term" value="P:negative regulation of transcription by RNA polymerase II"/>
    <property type="evidence" value="ECO:0000318"/>
    <property type="project" value="GO_Central"/>
</dbReference>
<dbReference type="InterPro" id="IPR032343">
    <property type="entry name" value="MBD2/MBD3_p55-bd"/>
</dbReference>
<dbReference type="InterPro" id="IPR025884">
    <property type="entry name" value="MeCpG-bd_2/3_C_dom"/>
</dbReference>
<dbReference type="Pfam" id="PF14048">
    <property type="entry name" value="MBD_C"/>
    <property type="match status" value="1"/>
</dbReference>
<dbReference type="Pfam" id="PF16564">
    <property type="entry name" value="MBDa"/>
    <property type="match status" value="1"/>
</dbReference>
<sequence length="204" mass="22665">MGEPAFTSFPSLPVLGKLKRNMMPWALQKKREIHMAKAHRRRAARSALPMRLTSCIFRRPVTRIRSHPDNQVRRRKGDEHLEKPQQLCAYRRLQALQPCSSQGEGSSPLHLESVLSILAPGTAGESLDRAGAERVRSPLEPTPGRFPAVAGGPTPGMGCQLPPPLSGQLVTPADIRRQARRVKKARERLAKALQADRLARRAEM</sequence>
<name>MB3LB_HUMAN</name>
<proteinExistence type="inferred from homology"/>
<keyword id="KW-1185">Reference proteome</keyword>
<feature type="chain" id="PRO_0000441416" description="Methyl-CpG-binding domain protein 3-like 2B">
    <location>
        <begin position="1"/>
        <end position="204"/>
    </location>
</feature>
<feature type="region of interest" description="Disordered" evidence="1">
    <location>
        <begin position="126"/>
        <end position="145"/>
    </location>
</feature>
<feature type="compositionally biased region" description="Basic and acidic residues" evidence="1">
    <location>
        <begin position="126"/>
        <end position="137"/>
    </location>
</feature>
<evidence type="ECO:0000256" key="1">
    <source>
        <dbReference type="SAM" id="MobiDB-lite"/>
    </source>
</evidence>
<evidence type="ECO:0000305" key="2"/>
<evidence type="ECO:0000312" key="3">
    <source>
        <dbReference type="HGNC" id="HGNC:53435"/>
    </source>
</evidence>
<reference key="1">
    <citation type="journal article" date="2004" name="Nature">
        <title>The DNA sequence and biology of human chromosome 19.</title>
        <authorList>
            <person name="Grimwood J."/>
            <person name="Gordon L.A."/>
            <person name="Olsen A.S."/>
            <person name="Terry A."/>
            <person name="Schmutz J."/>
            <person name="Lamerdin J.E."/>
            <person name="Hellsten U."/>
            <person name="Goodstein D."/>
            <person name="Couronne O."/>
            <person name="Tran-Gyamfi M."/>
            <person name="Aerts A."/>
            <person name="Altherr M."/>
            <person name="Ashworth L."/>
            <person name="Bajorek E."/>
            <person name="Black S."/>
            <person name="Branscomb E."/>
            <person name="Caenepeel S."/>
            <person name="Carrano A.V."/>
            <person name="Caoile C."/>
            <person name="Chan Y.M."/>
            <person name="Christensen M."/>
            <person name="Cleland C.A."/>
            <person name="Copeland A."/>
            <person name="Dalin E."/>
            <person name="Dehal P."/>
            <person name="Denys M."/>
            <person name="Detter J.C."/>
            <person name="Escobar J."/>
            <person name="Flowers D."/>
            <person name="Fotopulos D."/>
            <person name="Garcia C."/>
            <person name="Georgescu A.M."/>
            <person name="Glavina T."/>
            <person name="Gomez M."/>
            <person name="Gonzales E."/>
            <person name="Groza M."/>
            <person name="Hammon N."/>
            <person name="Hawkins T."/>
            <person name="Haydu L."/>
            <person name="Ho I."/>
            <person name="Huang W."/>
            <person name="Israni S."/>
            <person name="Jett J."/>
            <person name="Kadner K."/>
            <person name="Kimball H."/>
            <person name="Kobayashi A."/>
            <person name="Larionov V."/>
            <person name="Leem S.-H."/>
            <person name="Lopez F."/>
            <person name="Lou Y."/>
            <person name="Lowry S."/>
            <person name="Malfatti S."/>
            <person name="Martinez D."/>
            <person name="McCready P.M."/>
            <person name="Medina C."/>
            <person name="Morgan J."/>
            <person name="Nelson K."/>
            <person name="Nolan M."/>
            <person name="Ovcharenko I."/>
            <person name="Pitluck S."/>
            <person name="Pollard M."/>
            <person name="Popkie A.P."/>
            <person name="Predki P."/>
            <person name="Quan G."/>
            <person name="Ramirez L."/>
            <person name="Rash S."/>
            <person name="Retterer J."/>
            <person name="Rodriguez A."/>
            <person name="Rogers S."/>
            <person name="Salamov A."/>
            <person name="Salazar A."/>
            <person name="She X."/>
            <person name="Smith D."/>
            <person name="Slezak T."/>
            <person name="Solovyev V."/>
            <person name="Thayer N."/>
            <person name="Tice H."/>
            <person name="Tsai M."/>
            <person name="Ustaszewska A."/>
            <person name="Vo N."/>
            <person name="Wagner M."/>
            <person name="Wheeler J."/>
            <person name="Wu K."/>
            <person name="Xie G."/>
            <person name="Yang J."/>
            <person name="Dubchak I."/>
            <person name="Furey T.S."/>
            <person name="DeJong P."/>
            <person name="Dickson M."/>
            <person name="Gordon D."/>
            <person name="Eichler E.E."/>
            <person name="Pennacchio L.A."/>
            <person name="Richardson P."/>
            <person name="Stubbs L."/>
            <person name="Rokhsar D.S."/>
            <person name="Myers R.M."/>
            <person name="Rubin E.M."/>
            <person name="Lucas S.M."/>
        </authorList>
    </citation>
    <scope>NUCLEOTIDE SEQUENCE [LARGE SCALE GENOMIC DNA]</scope>
</reference>
<accession>A0A1B0GVZ6</accession>